<reference key="1">
    <citation type="journal article" date="2007" name="Proc. Natl. Acad. Sci. U.S.A.">
        <title>The genome of Syntrophus aciditrophicus: life at the thermodynamic limit of microbial growth.</title>
        <authorList>
            <person name="McInerney M.J."/>
            <person name="Rohlin L."/>
            <person name="Mouttaki H."/>
            <person name="Kim U."/>
            <person name="Krupp R.S."/>
            <person name="Rios-Hernandez L."/>
            <person name="Sieber J."/>
            <person name="Struchtemeyer C.G."/>
            <person name="Bhattacharyya A."/>
            <person name="Campbell J.W."/>
            <person name="Gunsalus R.P."/>
        </authorList>
    </citation>
    <scope>NUCLEOTIDE SEQUENCE [LARGE SCALE GENOMIC DNA]</scope>
    <source>
        <strain>SB</strain>
    </source>
</reference>
<organism>
    <name type="scientific">Syntrophus aciditrophicus (strain SB)</name>
    <dbReference type="NCBI Taxonomy" id="56780"/>
    <lineage>
        <taxon>Bacteria</taxon>
        <taxon>Pseudomonadati</taxon>
        <taxon>Thermodesulfobacteriota</taxon>
        <taxon>Syntrophia</taxon>
        <taxon>Syntrophales</taxon>
        <taxon>Syntrophaceae</taxon>
        <taxon>Syntrophus</taxon>
    </lineage>
</organism>
<protein>
    <recommendedName>
        <fullName evidence="1">Ribosomal RNA small subunit methyltransferase A</fullName>
        <ecNumber evidence="1">2.1.1.182</ecNumber>
    </recommendedName>
    <alternativeName>
        <fullName evidence="1">16S rRNA (adenine(1518)-N(6)/adenine(1519)-N(6))-dimethyltransferase</fullName>
    </alternativeName>
    <alternativeName>
        <fullName evidence="1">16S rRNA dimethyladenosine transferase</fullName>
    </alternativeName>
    <alternativeName>
        <fullName evidence="1">16S rRNA dimethylase</fullName>
    </alternativeName>
    <alternativeName>
        <fullName evidence="1">S-adenosylmethionine-6-N', N'-adenosyl(rRNA) dimethyltransferase</fullName>
    </alternativeName>
</protein>
<dbReference type="EC" id="2.1.1.182" evidence="1"/>
<dbReference type="EMBL" id="CP000252">
    <property type="protein sequence ID" value="ABC77113.1"/>
    <property type="molecule type" value="Genomic_DNA"/>
</dbReference>
<dbReference type="RefSeq" id="WP_011417142.1">
    <property type="nucleotide sequence ID" value="NC_007759.1"/>
</dbReference>
<dbReference type="SMR" id="Q2LSQ6"/>
<dbReference type="FunCoup" id="Q2LSQ6">
    <property type="interactions" value="443"/>
</dbReference>
<dbReference type="STRING" id="56780.SYN_00421"/>
<dbReference type="KEGG" id="sat:SYN_00421"/>
<dbReference type="eggNOG" id="COG0030">
    <property type="taxonomic scope" value="Bacteria"/>
</dbReference>
<dbReference type="HOGENOM" id="CLU_041220_0_0_7"/>
<dbReference type="InParanoid" id="Q2LSQ6"/>
<dbReference type="OrthoDB" id="9814755at2"/>
<dbReference type="Proteomes" id="UP000001933">
    <property type="component" value="Chromosome"/>
</dbReference>
<dbReference type="GO" id="GO:0005829">
    <property type="term" value="C:cytosol"/>
    <property type="evidence" value="ECO:0007669"/>
    <property type="project" value="TreeGrafter"/>
</dbReference>
<dbReference type="GO" id="GO:0052908">
    <property type="term" value="F:16S rRNA (adenine(1518)-N(6)/adenine(1519)-N(6))-dimethyltransferase activity"/>
    <property type="evidence" value="ECO:0007669"/>
    <property type="project" value="UniProtKB-EC"/>
</dbReference>
<dbReference type="GO" id="GO:0003723">
    <property type="term" value="F:RNA binding"/>
    <property type="evidence" value="ECO:0007669"/>
    <property type="project" value="UniProtKB-KW"/>
</dbReference>
<dbReference type="CDD" id="cd02440">
    <property type="entry name" value="AdoMet_MTases"/>
    <property type="match status" value="1"/>
</dbReference>
<dbReference type="FunFam" id="3.40.50.150:FF:000023">
    <property type="entry name" value="Ribosomal RNA small subunit methyltransferase A"/>
    <property type="match status" value="1"/>
</dbReference>
<dbReference type="Gene3D" id="1.10.8.100">
    <property type="entry name" value="Ribosomal RNA adenine dimethylase-like, domain 2"/>
    <property type="match status" value="1"/>
</dbReference>
<dbReference type="Gene3D" id="3.40.50.150">
    <property type="entry name" value="Vaccinia Virus protein VP39"/>
    <property type="match status" value="1"/>
</dbReference>
<dbReference type="HAMAP" id="MF_00607">
    <property type="entry name" value="16SrRNA_methyltr_A"/>
    <property type="match status" value="1"/>
</dbReference>
<dbReference type="InterPro" id="IPR001737">
    <property type="entry name" value="KsgA/Erm"/>
</dbReference>
<dbReference type="InterPro" id="IPR023165">
    <property type="entry name" value="rRNA_Ade_diMease-like_C"/>
</dbReference>
<dbReference type="InterPro" id="IPR020596">
    <property type="entry name" value="rRNA_Ade_Mease_Trfase_CS"/>
</dbReference>
<dbReference type="InterPro" id="IPR020598">
    <property type="entry name" value="rRNA_Ade_methylase_Trfase_N"/>
</dbReference>
<dbReference type="InterPro" id="IPR011530">
    <property type="entry name" value="rRNA_adenine_dimethylase"/>
</dbReference>
<dbReference type="InterPro" id="IPR029063">
    <property type="entry name" value="SAM-dependent_MTases_sf"/>
</dbReference>
<dbReference type="NCBIfam" id="TIGR00755">
    <property type="entry name" value="ksgA"/>
    <property type="match status" value="1"/>
</dbReference>
<dbReference type="PANTHER" id="PTHR11727">
    <property type="entry name" value="DIMETHYLADENOSINE TRANSFERASE"/>
    <property type="match status" value="1"/>
</dbReference>
<dbReference type="PANTHER" id="PTHR11727:SF7">
    <property type="entry name" value="DIMETHYLADENOSINE TRANSFERASE-RELATED"/>
    <property type="match status" value="1"/>
</dbReference>
<dbReference type="Pfam" id="PF00398">
    <property type="entry name" value="RrnaAD"/>
    <property type="match status" value="1"/>
</dbReference>
<dbReference type="SMART" id="SM00650">
    <property type="entry name" value="rADc"/>
    <property type="match status" value="1"/>
</dbReference>
<dbReference type="SUPFAM" id="SSF53335">
    <property type="entry name" value="S-adenosyl-L-methionine-dependent methyltransferases"/>
    <property type="match status" value="1"/>
</dbReference>
<dbReference type="PROSITE" id="PS01131">
    <property type="entry name" value="RRNA_A_DIMETH"/>
    <property type="match status" value="1"/>
</dbReference>
<dbReference type="PROSITE" id="PS51689">
    <property type="entry name" value="SAM_RNA_A_N6_MT"/>
    <property type="match status" value="1"/>
</dbReference>
<keyword id="KW-0963">Cytoplasm</keyword>
<keyword id="KW-0489">Methyltransferase</keyword>
<keyword id="KW-1185">Reference proteome</keyword>
<keyword id="KW-0694">RNA-binding</keyword>
<keyword id="KW-0698">rRNA processing</keyword>
<keyword id="KW-0949">S-adenosyl-L-methionine</keyword>
<keyword id="KW-0808">Transferase</keyword>
<sequence length="280" mass="31594">MTFVRQILRNHDIKPVKRLGQCFLADFSVMKKIVELAEIKEDETIVEIGSGLGLMTSLMAERAAWVHAVEIDGKLVSVLKERLKEYHNVTVIHGDILKYDFLTALGENSVKKIKIIGNIPYSISSPILFHILDHRKQISTAVLMMQKEVADRLCAVPGTKAYGIPTVLFGLYARISRELTVAPGCFYPKPEVTSTVVKMLIPEEPLYWVENDALFFRLVKAAFAQRRKTLLNNMKNAHWKDCDAGRIENLLRDMGAGEKIRAEELSIQQFAALCNSLSYS</sequence>
<name>RSMA_SYNAS</name>
<gene>
    <name evidence="1" type="primary">rsmA</name>
    <name evidence="1" type="synonym">ksgA</name>
    <name type="ordered locus">SYNAS_12340</name>
    <name type="ORF">SYN_00421</name>
</gene>
<evidence type="ECO:0000255" key="1">
    <source>
        <dbReference type="HAMAP-Rule" id="MF_00607"/>
    </source>
</evidence>
<proteinExistence type="inferred from homology"/>
<accession>Q2LSQ6</accession>
<feature type="chain" id="PRO_0000257362" description="Ribosomal RNA small subunit methyltransferase A">
    <location>
        <begin position="1"/>
        <end position="280"/>
    </location>
</feature>
<feature type="binding site" evidence="1">
    <location>
        <position position="24"/>
    </location>
    <ligand>
        <name>S-adenosyl-L-methionine</name>
        <dbReference type="ChEBI" id="CHEBI:59789"/>
    </ligand>
</feature>
<feature type="binding site" evidence="1">
    <location>
        <position position="49"/>
    </location>
    <ligand>
        <name>S-adenosyl-L-methionine</name>
        <dbReference type="ChEBI" id="CHEBI:59789"/>
    </ligand>
</feature>
<feature type="binding site" evidence="1">
    <location>
        <position position="70"/>
    </location>
    <ligand>
        <name>S-adenosyl-L-methionine</name>
        <dbReference type="ChEBI" id="CHEBI:59789"/>
    </ligand>
</feature>
<feature type="binding site" evidence="1">
    <location>
        <position position="95"/>
    </location>
    <ligand>
        <name>S-adenosyl-L-methionine</name>
        <dbReference type="ChEBI" id="CHEBI:59789"/>
    </ligand>
</feature>
<feature type="binding site" evidence="1">
    <location>
        <position position="118"/>
    </location>
    <ligand>
        <name>S-adenosyl-L-methionine</name>
        <dbReference type="ChEBI" id="CHEBI:59789"/>
    </ligand>
</feature>
<comment type="function">
    <text evidence="1">Specifically dimethylates two adjacent adenosines (A1518 and A1519) in the loop of a conserved hairpin near the 3'-end of 16S rRNA in the 30S particle. May play a critical role in biogenesis of 30S subunits.</text>
</comment>
<comment type="catalytic activity">
    <reaction evidence="1">
        <text>adenosine(1518)/adenosine(1519) in 16S rRNA + 4 S-adenosyl-L-methionine = N(6)-dimethyladenosine(1518)/N(6)-dimethyladenosine(1519) in 16S rRNA + 4 S-adenosyl-L-homocysteine + 4 H(+)</text>
        <dbReference type="Rhea" id="RHEA:19609"/>
        <dbReference type="Rhea" id="RHEA-COMP:10232"/>
        <dbReference type="Rhea" id="RHEA-COMP:10233"/>
        <dbReference type="ChEBI" id="CHEBI:15378"/>
        <dbReference type="ChEBI" id="CHEBI:57856"/>
        <dbReference type="ChEBI" id="CHEBI:59789"/>
        <dbReference type="ChEBI" id="CHEBI:74411"/>
        <dbReference type="ChEBI" id="CHEBI:74493"/>
        <dbReference type="EC" id="2.1.1.182"/>
    </reaction>
</comment>
<comment type="subcellular location">
    <subcellularLocation>
        <location evidence="1">Cytoplasm</location>
    </subcellularLocation>
</comment>
<comment type="similarity">
    <text evidence="1">Belongs to the class I-like SAM-binding methyltransferase superfamily. rRNA adenine N(6)-methyltransferase family. RsmA subfamily.</text>
</comment>